<comment type="function">
    <text evidence="1">Contributes to K(+)/H(+) antiport activity by supporting proton efflux to control proton extrusion and homeostasis in chloroplasts in a light-dependent manner to modulate photosynthesis. Prevents excessive induction of non-photochemical quenching (NPQ) under continuous-light conditions. Indirectly promotes efficient inorganic carbon uptake into chloroplasts.</text>
</comment>
<comment type="catalytic activity">
    <reaction evidence="1">
        <text>K(+)(in) + H(+)(out) = K(+)(out) + H(+)(in)</text>
        <dbReference type="Rhea" id="RHEA:29467"/>
        <dbReference type="ChEBI" id="CHEBI:15378"/>
        <dbReference type="ChEBI" id="CHEBI:29103"/>
    </reaction>
</comment>
<comment type="subcellular location">
    <subcellularLocation>
        <location evidence="1">Plastid</location>
        <location evidence="1">Chloroplast inner membrane</location>
        <topology evidence="1">Multi-pass membrane protein</topology>
    </subcellularLocation>
</comment>
<comment type="similarity">
    <text evidence="1 2">Belongs to the CemA family.</text>
</comment>
<keyword id="KW-0050">Antiport</keyword>
<keyword id="KW-0150">Chloroplast</keyword>
<keyword id="KW-0375">Hydrogen ion transport</keyword>
<keyword id="KW-0406">Ion transport</keyword>
<keyword id="KW-0472">Membrane</keyword>
<keyword id="KW-0934">Plastid</keyword>
<keyword id="KW-1001">Plastid inner membrane</keyword>
<keyword id="KW-0630">Potassium</keyword>
<keyword id="KW-0633">Potassium transport</keyword>
<keyword id="KW-0812">Transmembrane</keyword>
<keyword id="KW-1133">Transmembrane helix</keyword>
<keyword id="KW-0813">Transport</keyword>
<geneLocation type="chloroplast"/>
<protein>
    <recommendedName>
        <fullName evidence="1">Potassium/proton antiporter CemA</fullName>
    </recommendedName>
    <alternativeName>
        <fullName evidence="1">Chloroplast envelope membrane protein A</fullName>
        <shortName evidence="1">CemA</shortName>
    </alternativeName>
</protein>
<organism>
    <name type="scientific">Porphyra purpurea</name>
    <name type="common">Red seaweed</name>
    <name type="synonym">Ulva purpurea</name>
    <dbReference type="NCBI Taxonomy" id="2787"/>
    <lineage>
        <taxon>Eukaryota</taxon>
        <taxon>Rhodophyta</taxon>
        <taxon>Bangiophyceae</taxon>
        <taxon>Bangiales</taxon>
        <taxon>Bangiaceae</taxon>
        <taxon>Porphyra</taxon>
    </lineage>
</organism>
<dbReference type="EMBL" id="U38804">
    <property type="protein sequence ID" value="AAC08118.1"/>
    <property type="molecule type" value="Genomic_DNA"/>
</dbReference>
<dbReference type="PIR" id="S73153">
    <property type="entry name" value="S73153"/>
</dbReference>
<dbReference type="RefSeq" id="NP_053842.1">
    <property type="nucleotide sequence ID" value="NC_000925.1"/>
</dbReference>
<dbReference type="SMR" id="P51232"/>
<dbReference type="GeneID" id="809861"/>
<dbReference type="GO" id="GO:0009706">
    <property type="term" value="C:chloroplast inner membrane"/>
    <property type="evidence" value="ECO:0007669"/>
    <property type="project" value="UniProtKB-SubCell"/>
</dbReference>
<dbReference type="GO" id="GO:0015297">
    <property type="term" value="F:antiporter activity"/>
    <property type="evidence" value="ECO:0007669"/>
    <property type="project" value="UniProtKB-KW"/>
</dbReference>
<dbReference type="GO" id="GO:0015078">
    <property type="term" value="F:proton transmembrane transporter activity"/>
    <property type="evidence" value="ECO:0007669"/>
    <property type="project" value="UniProtKB-UniRule"/>
</dbReference>
<dbReference type="GO" id="GO:0006813">
    <property type="term" value="P:potassium ion transport"/>
    <property type="evidence" value="ECO:0007669"/>
    <property type="project" value="UniProtKB-UniRule"/>
</dbReference>
<dbReference type="HAMAP" id="MF_01308">
    <property type="entry name" value="CemA_PxcA"/>
    <property type="match status" value="1"/>
</dbReference>
<dbReference type="InterPro" id="IPR004282">
    <property type="entry name" value="CemA"/>
</dbReference>
<dbReference type="PANTHER" id="PTHR33650:SF2">
    <property type="entry name" value="CHLOROPLAST ENVELOPE MEMBRANE PROTEIN"/>
    <property type="match status" value="1"/>
</dbReference>
<dbReference type="PANTHER" id="PTHR33650">
    <property type="entry name" value="CHLOROPLAST ENVELOPE MEMBRANE PROTEIN-RELATED"/>
    <property type="match status" value="1"/>
</dbReference>
<dbReference type="Pfam" id="PF03040">
    <property type="entry name" value="CemA"/>
    <property type="match status" value="1"/>
</dbReference>
<evidence type="ECO:0000255" key="1">
    <source>
        <dbReference type="HAMAP-Rule" id="MF_01308"/>
    </source>
</evidence>
<evidence type="ECO:0000305" key="2"/>
<proteinExistence type="inferred from homology"/>
<sequence length="278" mass="32440">MKYWNLKRTNQSTFEKVGPIPRSITNTFEKFRKELDPNGESEAIEEFRLSRHQTITSVKYIFLLLISPVLVNQASKFFDFGPCIDYLWNQEQPKIFINSSQEERAFAELQRFEEKIHFEVLLNPSGNISYEIIEKRVQLKARELGEYYANESANAVKNILSDILSIAVFILLMITGQRQISIVKSFLNEIIYGLSDTAKAFLIILFTDMFVGFHSPHGWEVIIEVILRHLGLPESRDFIFLFISTFPVILDTIFKYWIFRYLNQVSPSAVATYHNMNE</sequence>
<reference key="1">
    <citation type="journal article" date="1995" name="Plant Mol. Biol. Rep.">
        <title>Complete nucleotide sequence of the Porphyra purpurea chloroplast genome.</title>
        <authorList>
            <person name="Reith M.E."/>
            <person name="Munholland J."/>
        </authorList>
    </citation>
    <scope>NUCLEOTIDE SEQUENCE [LARGE SCALE GENOMIC DNA]</scope>
    <source>
        <strain>Avonport</strain>
    </source>
</reference>
<feature type="chain" id="PRO_0000216658" description="Potassium/proton antiporter CemA">
    <location>
        <begin position="1"/>
        <end position="278"/>
    </location>
</feature>
<feature type="transmembrane region" description="Helical" evidence="1">
    <location>
        <begin position="61"/>
        <end position="81"/>
    </location>
</feature>
<feature type="transmembrane region" description="Helical" evidence="1">
    <location>
        <begin position="155"/>
        <end position="175"/>
    </location>
</feature>
<feature type="transmembrane region" description="Helical" evidence="1">
    <location>
        <begin position="203"/>
        <end position="223"/>
    </location>
</feature>
<feature type="transmembrane region" description="Helical" evidence="1">
    <location>
        <begin position="238"/>
        <end position="258"/>
    </location>
</feature>
<accession>P51232</accession>
<gene>
    <name evidence="1" type="primary">cemA</name>
    <name type="synonym">ycf10</name>
</gene>
<name>CEMA_PORPU</name>